<sequence>MPTINQLIRKERKKVVKRKKTPALQACPQRRGVCTRVYTTTPKKPNSALRKVARVRLTNGLEVTAYIPGEGHNLQEHSVVMIRGGRVKDLPGVRYHIVRGTLDTSGVQDRRQGRSKYGAKRPK</sequence>
<name>RS12_NITV2</name>
<gene>
    <name evidence="2" type="primary">rpsL</name>
    <name type="ordered locus">DVU_1298</name>
</gene>
<reference key="1">
    <citation type="journal article" date="2004" name="Nat. Biotechnol.">
        <title>The genome sequence of the anaerobic, sulfate-reducing bacterium Desulfovibrio vulgaris Hildenborough.</title>
        <authorList>
            <person name="Heidelberg J.F."/>
            <person name="Seshadri R."/>
            <person name="Haveman S.A."/>
            <person name="Hemme C.L."/>
            <person name="Paulsen I.T."/>
            <person name="Kolonay J.F."/>
            <person name="Eisen J.A."/>
            <person name="Ward N.L."/>
            <person name="Methe B.A."/>
            <person name="Brinkac L.M."/>
            <person name="Daugherty S.C."/>
            <person name="DeBoy R.T."/>
            <person name="Dodson R.J."/>
            <person name="Durkin A.S."/>
            <person name="Madupu R."/>
            <person name="Nelson W.C."/>
            <person name="Sullivan S.A."/>
            <person name="Fouts D.E."/>
            <person name="Haft D.H."/>
            <person name="Selengut J."/>
            <person name="Peterson J.D."/>
            <person name="Davidsen T.M."/>
            <person name="Zafar N."/>
            <person name="Zhou L."/>
            <person name="Radune D."/>
            <person name="Dimitrov G."/>
            <person name="Hance M."/>
            <person name="Tran K."/>
            <person name="Khouri H.M."/>
            <person name="Gill J."/>
            <person name="Utterback T.R."/>
            <person name="Feldblyum T.V."/>
            <person name="Wall J.D."/>
            <person name="Voordouw G."/>
            <person name="Fraser C.M."/>
        </authorList>
    </citation>
    <scope>NUCLEOTIDE SEQUENCE [LARGE SCALE GENOMIC DNA]</scope>
    <source>
        <strain>ATCC 29579 / DSM 644 / CCUG 34227 / NCIMB 8303 / VKM B-1760 / Hildenborough</strain>
    </source>
</reference>
<organism>
    <name type="scientific">Nitratidesulfovibrio vulgaris (strain ATCC 29579 / DSM 644 / CCUG 34227 / NCIMB 8303 / VKM B-1760 / Hildenborough)</name>
    <name type="common">Desulfovibrio vulgaris</name>
    <dbReference type="NCBI Taxonomy" id="882"/>
    <lineage>
        <taxon>Bacteria</taxon>
        <taxon>Pseudomonadati</taxon>
        <taxon>Thermodesulfobacteriota</taxon>
        <taxon>Desulfovibrionia</taxon>
        <taxon>Desulfovibrionales</taxon>
        <taxon>Desulfovibrionaceae</taxon>
        <taxon>Nitratidesulfovibrio</taxon>
    </lineage>
</organism>
<dbReference type="EMBL" id="AE017285">
    <property type="protein sequence ID" value="AAS95776.1"/>
    <property type="molecule type" value="Genomic_DNA"/>
</dbReference>
<dbReference type="RefSeq" id="WP_010938593.1">
    <property type="nucleotide sequence ID" value="NC_002937.3"/>
</dbReference>
<dbReference type="RefSeq" id="YP_010517.1">
    <property type="nucleotide sequence ID" value="NC_002937.3"/>
</dbReference>
<dbReference type="SMR" id="Q72CI5"/>
<dbReference type="STRING" id="882.DVU_1298"/>
<dbReference type="PaxDb" id="882-DVU_1298"/>
<dbReference type="EnsemblBacteria" id="AAS95776">
    <property type="protein sequence ID" value="AAS95776"/>
    <property type="gene ID" value="DVU_1298"/>
</dbReference>
<dbReference type="KEGG" id="dvu:DVU_1298"/>
<dbReference type="PATRIC" id="fig|882.5.peg.1210"/>
<dbReference type="eggNOG" id="COG0048">
    <property type="taxonomic scope" value="Bacteria"/>
</dbReference>
<dbReference type="HOGENOM" id="CLU_104295_1_2_7"/>
<dbReference type="OrthoDB" id="9802366at2"/>
<dbReference type="PhylomeDB" id="Q72CI5"/>
<dbReference type="Proteomes" id="UP000002194">
    <property type="component" value="Chromosome"/>
</dbReference>
<dbReference type="GO" id="GO:0015935">
    <property type="term" value="C:small ribosomal subunit"/>
    <property type="evidence" value="ECO:0007669"/>
    <property type="project" value="InterPro"/>
</dbReference>
<dbReference type="GO" id="GO:0019843">
    <property type="term" value="F:rRNA binding"/>
    <property type="evidence" value="ECO:0007669"/>
    <property type="project" value="UniProtKB-UniRule"/>
</dbReference>
<dbReference type="GO" id="GO:0003735">
    <property type="term" value="F:structural constituent of ribosome"/>
    <property type="evidence" value="ECO:0007669"/>
    <property type="project" value="InterPro"/>
</dbReference>
<dbReference type="GO" id="GO:0000049">
    <property type="term" value="F:tRNA binding"/>
    <property type="evidence" value="ECO:0007669"/>
    <property type="project" value="UniProtKB-UniRule"/>
</dbReference>
<dbReference type="GO" id="GO:0006412">
    <property type="term" value="P:translation"/>
    <property type="evidence" value="ECO:0007669"/>
    <property type="project" value="UniProtKB-UniRule"/>
</dbReference>
<dbReference type="CDD" id="cd03368">
    <property type="entry name" value="Ribosomal_S12"/>
    <property type="match status" value="1"/>
</dbReference>
<dbReference type="FunFam" id="2.40.50.140:FF:000001">
    <property type="entry name" value="30S ribosomal protein S12"/>
    <property type="match status" value="1"/>
</dbReference>
<dbReference type="Gene3D" id="2.40.50.140">
    <property type="entry name" value="Nucleic acid-binding proteins"/>
    <property type="match status" value="1"/>
</dbReference>
<dbReference type="HAMAP" id="MF_00403_B">
    <property type="entry name" value="Ribosomal_uS12_B"/>
    <property type="match status" value="1"/>
</dbReference>
<dbReference type="InterPro" id="IPR012340">
    <property type="entry name" value="NA-bd_OB-fold"/>
</dbReference>
<dbReference type="InterPro" id="IPR006032">
    <property type="entry name" value="Ribosomal_uS12"/>
</dbReference>
<dbReference type="InterPro" id="IPR005679">
    <property type="entry name" value="Ribosomal_uS12_bac"/>
</dbReference>
<dbReference type="NCBIfam" id="TIGR00981">
    <property type="entry name" value="rpsL_bact"/>
    <property type="match status" value="1"/>
</dbReference>
<dbReference type="PANTHER" id="PTHR11652">
    <property type="entry name" value="30S RIBOSOMAL PROTEIN S12 FAMILY MEMBER"/>
    <property type="match status" value="1"/>
</dbReference>
<dbReference type="Pfam" id="PF00164">
    <property type="entry name" value="Ribosom_S12_S23"/>
    <property type="match status" value="1"/>
</dbReference>
<dbReference type="PIRSF" id="PIRSF002133">
    <property type="entry name" value="Ribosomal_S12/S23"/>
    <property type="match status" value="1"/>
</dbReference>
<dbReference type="PRINTS" id="PR01034">
    <property type="entry name" value="RIBOSOMALS12"/>
</dbReference>
<dbReference type="SUPFAM" id="SSF50249">
    <property type="entry name" value="Nucleic acid-binding proteins"/>
    <property type="match status" value="1"/>
</dbReference>
<dbReference type="PROSITE" id="PS00055">
    <property type="entry name" value="RIBOSOMAL_S12"/>
    <property type="match status" value="1"/>
</dbReference>
<feature type="chain" id="PRO_0000146218" description="Small ribosomal subunit protein uS12">
    <location>
        <begin position="1"/>
        <end position="123"/>
    </location>
</feature>
<feature type="region of interest" description="Disordered" evidence="3">
    <location>
        <begin position="103"/>
        <end position="123"/>
    </location>
</feature>
<feature type="compositionally biased region" description="Basic residues" evidence="3">
    <location>
        <begin position="113"/>
        <end position="123"/>
    </location>
</feature>
<feature type="modified residue" description="3-methylthioaspartic acid" evidence="1">
    <location>
        <position position="89"/>
    </location>
</feature>
<proteinExistence type="inferred from homology"/>
<accession>Q72CI5</accession>
<comment type="function">
    <text evidence="2">With S4 and S5 plays an important role in translational accuracy.</text>
</comment>
<comment type="function">
    <text evidence="2">Interacts with and stabilizes bases of the 16S rRNA that are involved in tRNA selection in the A site and with the mRNA backbone. Located at the interface of the 30S and 50S subunits, it traverses the body of the 30S subunit contacting proteins on the other side and probably holding the rRNA structure together. The combined cluster of proteins S8, S12 and S17 appears to hold together the shoulder and platform of the 30S subunit.</text>
</comment>
<comment type="subunit">
    <text evidence="2">Part of the 30S ribosomal subunit. Contacts proteins S8 and S17. May interact with IF1 in the 30S initiation complex.</text>
</comment>
<comment type="similarity">
    <text evidence="2">Belongs to the universal ribosomal protein uS12 family.</text>
</comment>
<evidence type="ECO:0000250" key="1"/>
<evidence type="ECO:0000255" key="2">
    <source>
        <dbReference type="HAMAP-Rule" id="MF_00403"/>
    </source>
</evidence>
<evidence type="ECO:0000256" key="3">
    <source>
        <dbReference type="SAM" id="MobiDB-lite"/>
    </source>
</evidence>
<evidence type="ECO:0000305" key="4"/>
<protein>
    <recommendedName>
        <fullName evidence="2">Small ribosomal subunit protein uS12</fullName>
    </recommendedName>
    <alternativeName>
        <fullName evidence="4">30S ribosomal protein S12</fullName>
    </alternativeName>
</protein>
<keyword id="KW-0488">Methylation</keyword>
<keyword id="KW-1185">Reference proteome</keyword>
<keyword id="KW-0687">Ribonucleoprotein</keyword>
<keyword id="KW-0689">Ribosomal protein</keyword>
<keyword id="KW-0694">RNA-binding</keyword>
<keyword id="KW-0699">rRNA-binding</keyword>
<keyword id="KW-0820">tRNA-binding</keyword>